<organism>
    <name type="scientific">Eremothecium gossypii (strain ATCC 10895 / CBS 109.51 / FGSC 9923 / NRRL Y-1056)</name>
    <name type="common">Yeast</name>
    <name type="synonym">Ashbya gossypii</name>
    <dbReference type="NCBI Taxonomy" id="284811"/>
    <lineage>
        <taxon>Eukaryota</taxon>
        <taxon>Fungi</taxon>
        <taxon>Dikarya</taxon>
        <taxon>Ascomycota</taxon>
        <taxon>Saccharomycotina</taxon>
        <taxon>Saccharomycetes</taxon>
        <taxon>Saccharomycetales</taxon>
        <taxon>Saccharomycetaceae</taxon>
        <taxon>Eremothecium</taxon>
    </lineage>
</organism>
<gene>
    <name type="primary">ATP10</name>
    <name type="ordered locus">AER060W</name>
</gene>
<dbReference type="EMBL" id="AE016818">
    <property type="protein sequence ID" value="AAS52744.2"/>
    <property type="molecule type" value="Genomic_DNA"/>
</dbReference>
<dbReference type="RefSeq" id="NP_984920.2">
    <property type="nucleotide sequence ID" value="NM_210274.2"/>
</dbReference>
<dbReference type="SMR" id="Q757F3"/>
<dbReference type="FunCoup" id="Q757F3">
    <property type="interactions" value="166"/>
</dbReference>
<dbReference type="STRING" id="284811.Q757F3"/>
<dbReference type="EnsemblFungi" id="AAS52744">
    <property type="protein sequence ID" value="AAS52744"/>
    <property type="gene ID" value="AGOS_AER060W"/>
</dbReference>
<dbReference type="GeneID" id="4621123"/>
<dbReference type="KEGG" id="ago:AGOS_AER060W"/>
<dbReference type="eggNOG" id="KOG4614">
    <property type="taxonomic scope" value="Eukaryota"/>
</dbReference>
<dbReference type="HOGENOM" id="CLU_047290_2_0_1"/>
<dbReference type="InParanoid" id="Q757F3"/>
<dbReference type="OMA" id="YFPNFHG"/>
<dbReference type="OrthoDB" id="17089at2759"/>
<dbReference type="Proteomes" id="UP000000591">
    <property type="component" value="Chromosome V"/>
</dbReference>
<dbReference type="GO" id="GO:0005743">
    <property type="term" value="C:mitochondrial inner membrane"/>
    <property type="evidence" value="ECO:0000318"/>
    <property type="project" value="GO_Central"/>
</dbReference>
<dbReference type="GO" id="GO:0051082">
    <property type="term" value="F:unfolded protein binding"/>
    <property type="evidence" value="ECO:0007669"/>
    <property type="project" value="EnsemblFungi"/>
</dbReference>
<dbReference type="GO" id="GO:0033615">
    <property type="term" value="P:mitochondrial proton-transporting ATP synthase complex assembly"/>
    <property type="evidence" value="ECO:0000318"/>
    <property type="project" value="GO_Central"/>
</dbReference>
<dbReference type="InterPro" id="IPR007849">
    <property type="entry name" value="ATP10"/>
</dbReference>
<dbReference type="PANTHER" id="PTHR28106">
    <property type="entry name" value="MITOCHONDRIAL ATPASE COMPLEX SUBUNIT ATP10"/>
    <property type="match status" value="1"/>
</dbReference>
<dbReference type="PANTHER" id="PTHR28106:SF1">
    <property type="entry name" value="MITOCHONDRIAL ATPASE COMPLEX SUBUNIT ATP10"/>
    <property type="match status" value="1"/>
</dbReference>
<dbReference type="Pfam" id="PF05176">
    <property type="entry name" value="ATP-synt_10"/>
    <property type="match status" value="1"/>
</dbReference>
<sequence length="272" mass="30721">MVIWRRYLSGTAQPLVFKKMNKALAQAAPREHVVRRLEQPVGMPQPPTAATRYVEGNSMLDMFSEEKTSRRAAELAAEFSKSGLYDAATFRKTNGRVFLPPASYWRAEHARYFPHLGGRTLTGARGSVEDVLAGKVSVVKVFSCETGEGLASSYFRHEGHDYLREDDVAPAQIVEISLTESWIKDWLVRLMAGRLRSLVPAARHERYFICRRAQLPFTVRESLELGNLYTGYVLVVDPQLKIRWMACGGAEKRDAELLWKCVRGVQRECAAV</sequence>
<feature type="chain" id="PRO_0000071724" description="Mitochondrial ATPase complex subunit ATP10">
    <location>
        <begin position="1"/>
        <end position="272"/>
    </location>
</feature>
<protein>
    <recommendedName>
        <fullName>Mitochondrial ATPase complex subunit ATP10</fullName>
    </recommendedName>
</protein>
<keyword id="KW-0472">Membrane</keyword>
<keyword id="KW-0496">Mitochondrion</keyword>
<keyword id="KW-0999">Mitochondrion inner membrane</keyword>
<keyword id="KW-1185">Reference proteome</keyword>
<proteinExistence type="inferred from homology"/>
<name>ATP10_EREGS</name>
<evidence type="ECO:0000250" key="1"/>
<evidence type="ECO:0000305" key="2"/>
<accession>Q757F3</accession>
<reference key="1">
    <citation type="journal article" date="2004" name="Science">
        <title>The Ashbya gossypii genome as a tool for mapping the ancient Saccharomyces cerevisiae genome.</title>
        <authorList>
            <person name="Dietrich F.S."/>
            <person name="Voegeli S."/>
            <person name="Brachat S."/>
            <person name="Lerch A."/>
            <person name="Gates K."/>
            <person name="Steiner S."/>
            <person name="Mohr C."/>
            <person name="Poehlmann R."/>
            <person name="Luedi P."/>
            <person name="Choi S."/>
            <person name="Wing R.A."/>
            <person name="Flavier A."/>
            <person name="Gaffney T.D."/>
            <person name="Philippsen P."/>
        </authorList>
    </citation>
    <scope>NUCLEOTIDE SEQUENCE [LARGE SCALE GENOMIC DNA]</scope>
    <source>
        <strain>ATCC 10895 / CBS 109.51 / FGSC 9923 / NRRL Y-1056</strain>
    </source>
</reference>
<reference key="2">
    <citation type="journal article" date="2013" name="G3 (Bethesda)">
        <title>Genomes of Ashbya fungi isolated from insects reveal four mating-type loci, numerous translocations, lack of transposons, and distinct gene duplications.</title>
        <authorList>
            <person name="Dietrich F.S."/>
            <person name="Voegeli S."/>
            <person name="Kuo S."/>
            <person name="Philippsen P."/>
        </authorList>
    </citation>
    <scope>GENOME REANNOTATION</scope>
    <scope>SEQUENCE REVISION TO 81; 117; 122; 126 AND 130</scope>
    <source>
        <strain>ATCC 10895 / CBS 109.51 / FGSC 9923 / NRRL Y-1056</strain>
    </source>
</reference>
<comment type="function">
    <text evidence="1">Involved in assembly of the mitochondrial F1-F0 complex.</text>
</comment>
<comment type="subcellular location">
    <subcellularLocation>
        <location evidence="1">Mitochondrion inner membrane</location>
    </subcellularLocation>
</comment>
<comment type="similarity">
    <text evidence="2">Belongs to the ATP10 family.</text>
</comment>